<gene>
    <name type="primary">PLD1</name>
    <name type="synonym">PLD</name>
</gene>
<protein>
    <recommendedName>
        <fullName>Phospholipase D alpha 1</fullName>
        <shortName>PLD alpha 1</shortName>
        <ecNumber>3.1.4.4</ecNumber>
    </recommendedName>
    <alternativeName>
        <fullName>Choline phosphatase 1</fullName>
    </alternativeName>
    <alternativeName>
        <fullName>Phosphatidylcholine-hydrolyzing phospholipase D 1</fullName>
    </alternativeName>
</protein>
<organism>
    <name type="scientific">Spuriopimpinella brachycarpa</name>
    <name type="common">Chamnamul</name>
    <name type="synonym">Pimpinella brachycarpa</name>
    <dbReference type="NCBI Taxonomy" id="45043"/>
    <lineage>
        <taxon>Eukaryota</taxon>
        <taxon>Viridiplantae</taxon>
        <taxon>Streptophyta</taxon>
        <taxon>Embryophyta</taxon>
        <taxon>Tracheophyta</taxon>
        <taxon>Spermatophyta</taxon>
        <taxon>Magnoliopsida</taxon>
        <taxon>eudicotyledons</taxon>
        <taxon>Gunneridae</taxon>
        <taxon>Pentapetalae</taxon>
        <taxon>asterids</taxon>
        <taxon>campanulids</taxon>
        <taxon>Apiales</taxon>
        <taxon>Apiaceae</taxon>
        <taxon>Apioideae</taxon>
        <taxon>Acronema clade</taxon>
        <taxon>Spuriopimpinella</taxon>
    </lineage>
</organism>
<sequence>MAKTLLHGTLHVTIFEVDHLKAGSVVVFSESLRRTLRKPLVLAKGTPKIYASIDLDKARVGRTRMIENEPNNPKWNESFHIYCGHPSTNVIFTVKDDNPIGATLIGRAYLPVHELLEGEEVDKWVEILDEDKNPISEGSKIHVKLQYFDITQDRNWAHGIRSSKFPGVPYTFFSQRPGCRISLYQDAHVPDNFVPKIPLSGGKFYEPHRCWEDVFDAITNAKHFIYITGWSVYTEFALIRDTRRPKPGGDIMLGELLKKKADEGVRVLMLVWDDRTSVGLLKKDGLMATHDQETEEYFRDSNVHCVLCLRNPDDGGGIIQGLTISTIFTHHQKIVVVDSEMPTSGSENRRVVSFVGGIDLCDGRYDTPFHSLFRTLDTAHHDDFHQPNFEGAAITKGGPREPWHDIHSRLEGPVAWDVLFNFEQRWRKQGGKDILLNLRELQDVIIPPSPVTFPDDDETWNVQLFRSIDEGAAFFFPQTPEEAAKAGLVSGKENIIVRSIQDAYIHAIRGPKISFILKISIFLEALLAGIQRILKMRTSVLCILIPKELSLKIVSKIEAGKRFTVYVVLPMWPEGIPESGSVQAILDWQRRTMEMMYKDIIQALQANGIEEDPRNYLTFFCLGNREVKRDGEYEPSEKPDPDTDYSRAQESRRFMIYVHAKMMIVDDEYIIIGSANINQRSMDGAKDSEIAMGAYQPHHLATREPARGQIHGFRMSLWYEHLGMLDDTLALPESVDCVQKVNTVADKYWDLYSSETLENDLPGHLLRYPIAVASEGNVTELPGTEFFPDTKARVLGAKSDFLPPILTT</sequence>
<name>PLDA1_SPUBR</name>
<dbReference type="EC" id="3.1.4.4"/>
<dbReference type="EMBL" id="U96438">
    <property type="protein sequence ID" value="AAB70463.1"/>
    <property type="molecule type" value="mRNA"/>
</dbReference>
<dbReference type="SMR" id="O04883"/>
<dbReference type="GO" id="GO:0005886">
    <property type="term" value="C:plasma membrane"/>
    <property type="evidence" value="ECO:0007669"/>
    <property type="project" value="TreeGrafter"/>
</dbReference>
<dbReference type="GO" id="GO:0005509">
    <property type="term" value="F:calcium ion binding"/>
    <property type="evidence" value="ECO:0007669"/>
    <property type="project" value="InterPro"/>
</dbReference>
<dbReference type="GO" id="GO:0004630">
    <property type="term" value="F:phospholipase D activity"/>
    <property type="evidence" value="ECO:0007669"/>
    <property type="project" value="UniProtKB-EC"/>
</dbReference>
<dbReference type="GO" id="GO:0046470">
    <property type="term" value="P:phosphatidylcholine metabolic process"/>
    <property type="evidence" value="ECO:0007669"/>
    <property type="project" value="InterPro"/>
</dbReference>
<dbReference type="GO" id="GO:0009395">
    <property type="term" value="P:phospholipid catabolic process"/>
    <property type="evidence" value="ECO:0007669"/>
    <property type="project" value="TreeGrafter"/>
</dbReference>
<dbReference type="CDD" id="cd04015">
    <property type="entry name" value="C2_plant_PLD"/>
    <property type="match status" value="1"/>
</dbReference>
<dbReference type="FunFam" id="3.30.870.10:FF:000025">
    <property type="entry name" value="Phospholipase D delta"/>
    <property type="match status" value="1"/>
</dbReference>
<dbReference type="Gene3D" id="2.60.40.150">
    <property type="entry name" value="C2 domain"/>
    <property type="match status" value="1"/>
</dbReference>
<dbReference type="Gene3D" id="3.30.870.10">
    <property type="entry name" value="Endonuclease Chain A"/>
    <property type="match status" value="2"/>
</dbReference>
<dbReference type="InterPro" id="IPR000008">
    <property type="entry name" value="C2_dom"/>
</dbReference>
<dbReference type="InterPro" id="IPR035892">
    <property type="entry name" value="C2_domain_sf"/>
</dbReference>
<dbReference type="InterPro" id="IPR001736">
    <property type="entry name" value="PLipase_D/transphosphatidylase"/>
</dbReference>
<dbReference type="InterPro" id="IPR024632">
    <property type="entry name" value="PLipase_D_C"/>
</dbReference>
<dbReference type="InterPro" id="IPR015679">
    <property type="entry name" value="PLipase_D_fam"/>
</dbReference>
<dbReference type="InterPro" id="IPR011402">
    <property type="entry name" value="PLipase_D_pln"/>
</dbReference>
<dbReference type="PANTHER" id="PTHR18896">
    <property type="entry name" value="PHOSPHOLIPASE D"/>
    <property type="match status" value="1"/>
</dbReference>
<dbReference type="PANTHER" id="PTHR18896:SF115">
    <property type="entry name" value="PHOSPHOLIPASE D ALPHA 1"/>
    <property type="match status" value="1"/>
</dbReference>
<dbReference type="Pfam" id="PF00168">
    <property type="entry name" value="C2"/>
    <property type="match status" value="1"/>
</dbReference>
<dbReference type="Pfam" id="PF12357">
    <property type="entry name" value="PLD_C"/>
    <property type="match status" value="1"/>
</dbReference>
<dbReference type="Pfam" id="PF00614">
    <property type="entry name" value="PLDc"/>
    <property type="match status" value="2"/>
</dbReference>
<dbReference type="PIRSF" id="PIRSF036470">
    <property type="entry name" value="PLD_plant"/>
    <property type="match status" value="1"/>
</dbReference>
<dbReference type="SMART" id="SM00239">
    <property type="entry name" value="C2"/>
    <property type="match status" value="1"/>
</dbReference>
<dbReference type="SMART" id="SM00155">
    <property type="entry name" value="PLDc"/>
    <property type="match status" value="2"/>
</dbReference>
<dbReference type="SUPFAM" id="SSF49562">
    <property type="entry name" value="C2 domain (Calcium/lipid-binding domain, CaLB)"/>
    <property type="match status" value="1"/>
</dbReference>
<dbReference type="SUPFAM" id="SSF56024">
    <property type="entry name" value="Phospholipase D/nuclease"/>
    <property type="match status" value="2"/>
</dbReference>
<dbReference type="PROSITE" id="PS50004">
    <property type="entry name" value="C2"/>
    <property type="match status" value="1"/>
</dbReference>
<dbReference type="PROSITE" id="PS50035">
    <property type="entry name" value="PLD"/>
    <property type="match status" value="2"/>
</dbReference>
<accession>O04883</accession>
<proteinExistence type="evidence at transcript level"/>
<comment type="function">
    <text>Hydrolyzes glycerol-phospholipids at the terminal phosphodiesteric bond. Plays an important role in various cellular processes.</text>
</comment>
<comment type="catalytic activity">
    <reaction>
        <text>a 1,2-diacyl-sn-glycero-3-phosphocholine + H2O = a 1,2-diacyl-sn-glycero-3-phosphate + choline + H(+)</text>
        <dbReference type="Rhea" id="RHEA:14445"/>
        <dbReference type="ChEBI" id="CHEBI:15354"/>
        <dbReference type="ChEBI" id="CHEBI:15377"/>
        <dbReference type="ChEBI" id="CHEBI:15378"/>
        <dbReference type="ChEBI" id="CHEBI:57643"/>
        <dbReference type="ChEBI" id="CHEBI:58608"/>
        <dbReference type="EC" id="3.1.4.4"/>
    </reaction>
</comment>
<comment type="cofactor">
    <cofactor evidence="1">
        <name>Ca(2+)</name>
        <dbReference type="ChEBI" id="CHEBI:29108"/>
    </cofactor>
</comment>
<comment type="domain">
    <text>C2 domain is a calcium-binding fold, and the binding promotes the protein association with membranes. A lower affinity toward calcium can be anticipated for PLD alpha due to the absence of two potential calcium ligands.</text>
</comment>
<comment type="similarity">
    <text evidence="5">Belongs to the phospholipase D family. C2-PLD subfamily.</text>
</comment>
<keyword id="KW-0106">Calcium</keyword>
<keyword id="KW-0378">Hydrolase</keyword>
<keyword id="KW-0442">Lipid degradation</keyword>
<keyword id="KW-0443">Lipid metabolism</keyword>
<keyword id="KW-0479">Metal-binding</keyword>
<keyword id="KW-0677">Repeat</keyword>
<evidence type="ECO:0000250" key="1"/>
<evidence type="ECO:0000250" key="2">
    <source>
        <dbReference type="UniProtKB" id="Q38882"/>
    </source>
</evidence>
<evidence type="ECO:0000255" key="3">
    <source>
        <dbReference type="PROSITE-ProRule" id="PRU00041"/>
    </source>
</evidence>
<evidence type="ECO:0000255" key="4">
    <source>
        <dbReference type="PROSITE-ProRule" id="PRU00153"/>
    </source>
</evidence>
<evidence type="ECO:0000305" key="5"/>
<reference key="1">
    <citation type="online journal article" date="1997" name="Plant Gene Register">
        <title>Nucleotide sequence of a cDNA encoding phospholipase D from Pimpinella brachycarpa.</title>
        <authorList>
            <person name="Cha Y.Y."/>
            <person name="Lee K.-W."/>
            <person name="Kim J.C."/>
            <person name="Han T.J."/>
            <person name="Lee W.S."/>
            <person name="Cho S.H."/>
        </authorList>
        <locator>PGR97-092</locator>
    </citation>
    <scope>NUCLEOTIDE SEQUENCE [MRNA]</scope>
</reference>
<feature type="chain" id="PRO_0000218822" description="Phospholipase D alpha 1">
    <location>
        <begin position="1"/>
        <end position="808"/>
    </location>
</feature>
<feature type="domain" description="C2" evidence="3">
    <location>
        <begin position="1"/>
        <end position="125"/>
    </location>
</feature>
<feature type="domain" description="PLD phosphodiesterase 1" evidence="4">
    <location>
        <begin position="326"/>
        <end position="364"/>
    </location>
</feature>
<feature type="domain" description="PLD phosphodiesterase 2" evidence="4">
    <location>
        <begin position="654"/>
        <end position="681"/>
    </location>
</feature>
<feature type="active site" evidence="4">
    <location>
        <position position="331"/>
    </location>
</feature>
<feature type="active site" evidence="4">
    <location>
        <position position="333"/>
    </location>
</feature>
<feature type="active site" evidence="4">
    <location>
        <position position="338"/>
    </location>
</feature>
<feature type="active site" evidence="4">
    <location>
        <position position="659"/>
    </location>
</feature>
<feature type="active site" evidence="4">
    <location>
        <position position="661"/>
    </location>
</feature>
<feature type="active site" evidence="4">
    <location>
        <position position="666"/>
    </location>
</feature>
<feature type="binding site" evidence="2">
    <location>
        <position position="186"/>
    </location>
    <ligand>
        <name>Ca(2+)</name>
        <dbReference type="ChEBI" id="CHEBI:29108"/>
    </ligand>
</feature>
<feature type="binding site" evidence="2">
    <location>
        <position position="331"/>
    </location>
    <ligand>
        <name>a 1,2-diacyl-sn-glycero-3-phosphate</name>
        <dbReference type="ChEBI" id="CHEBI:58608"/>
    </ligand>
</feature>
<feature type="binding site" evidence="2">
    <location>
        <position position="370"/>
    </location>
    <ligand>
        <name>Ca(2+)</name>
        <dbReference type="ChEBI" id="CHEBI:29108"/>
    </ligand>
</feature>
<feature type="binding site" evidence="2">
    <location>
        <position position="404"/>
    </location>
    <ligand>
        <name>Ca(2+)</name>
        <dbReference type="ChEBI" id="CHEBI:29108"/>
    </ligand>
</feature>
<feature type="binding site" evidence="2">
    <location>
        <position position="659"/>
    </location>
    <ligand>
        <name>a 1,2-diacyl-sn-glycero-3-phosphate</name>
        <dbReference type="ChEBI" id="CHEBI:58608"/>
    </ligand>
</feature>
<feature type="binding site" evidence="2">
    <location>
        <position position="720"/>
    </location>
    <ligand>
        <name>Ca(2+)</name>
        <dbReference type="ChEBI" id="CHEBI:29108"/>
    </ligand>
</feature>